<keyword id="KW-0046">Antibiotic resistance</keyword>
<keyword id="KW-0997">Cell inner membrane</keyword>
<keyword id="KW-1003">Cell membrane</keyword>
<keyword id="KW-0133">Cell shape</keyword>
<keyword id="KW-0961">Cell wall biogenesis/degradation</keyword>
<keyword id="KW-0378">Hydrolase</keyword>
<keyword id="KW-0472">Membrane</keyword>
<keyword id="KW-0573">Peptidoglycan synthesis</keyword>
<keyword id="KW-0812">Transmembrane</keyword>
<keyword id="KW-1133">Transmembrane helix</keyword>
<evidence type="ECO:0000255" key="1">
    <source>
        <dbReference type="HAMAP-Rule" id="MF_01006"/>
    </source>
</evidence>
<gene>
    <name evidence="1" type="primary">uppP2</name>
    <name type="ordered locus">BURPS1710b_3120</name>
</gene>
<accession>Q3JPL1</accession>
<feature type="chain" id="PRO_0000227609" description="Undecaprenyl-diphosphatase 2">
    <location>
        <begin position="1"/>
        <end position="276"/>
    </location>
</feature>
<feature type="transmembrane region" description="Helical" evidence="1">
    <location>
        <begin position="85"/>
        <end position="105"/>
    </location>
</feature>
<feature type="transmembrane region" description="Helical" evidence="1">
    <location>
        <begin position="108"/>
        <end position="128"/>
    </location>
</feature>
<feature type="transmembrane region" description="Helical" evidence="1">
    <location>
        <begin position="187"/>
        <end position="207"/>
    </location>
</feature>
<feature type="transmembrane region" description="Helical" evidence="1">
    <location>
        <begin position="217"/>
        <end position="237"/>
    </location>
</feature>
<feature type="transmembrane region" description="Helical" evidence="1">
    <location>
        <begin position="253"/>
        <end position="273"/>
    </location>
</feature>
<proteinExistence type="inferred from homology"/>
<dbReference type="EC" id="3.6.1.27" evidence="1"/>
<dbReference type="EMBL" id="CP000124">
    <property type="protein sequence ID" value="ABA50120.1"/>
    <property type="molecule type" value="Genomic_DNA"/>
</dbReference>
<dbReference type="RefSeq" id="WP_004185904.1">
    <property type="nucleotide sequence ID" value="NC_007434.1"/>
</dbReference>
<dbReference type="SMR" id="Q3JPL1"/>
<dbReference type="EnsemblBacteria" id="ABA50120">
    <property type="protein sequence ID" value="ABA50120"/>
    <property type="gene ID" value="BURPS1710b_3120"/>
</dbReference>
<dbReference type="KEGG" id="bpm:BURPS1710b_3120"/>
<dbReference type="HOGENOM" id="CLU_060296_2_0_4"/>
<dbReference type="Proteomes" id="UP000002700">
    <property type="component" value="Chromosome I"/>
</dbReference>
<dbReference type="GO" id="GO:0005886">
    <property type="term" value="C:plasma membrane"/>
    <property type="evidence" value="ECO:0007669"/>
    <property type="project" value="UniProtKB-SubCell"/>
</dbReference>
<dbReference type="GO" id="GO:0050380">
    <property type="term" value="F:undecaprenyl-diphosphatase activity"/>
    <property type="evidence" value="ECO:0007669"/>
    <property type="project" value="UniProtKB-UniRule"/>
</dbReference>
<dbReference type="GO" id="GO:0071555">
    <property type="term" value="P:cell wall organization"/>
    <property type="evidence" value="ECO:0007669"/>
    <property type="project" value="UniProtKB-KW"/>
</dbReference>
<dbReference type="GO" id="GO:0009252">
    <property type="term" value="P:peptidoglycan biosynthetic process"/>
    <property type="evidence" value="ECO:0007669"/>
    <property type="project" value="UniProtKB-KW"/>
</dbReference>
<dbReference type="GO" id="GO:0008360">
    <property type="term" value="P:regulation of cell shape"/>
    <property type="evidence" value="ECO:0007669"/>
    <property type="project" value="UniProtKB-KW"/>
</dbReference>
<dbReference type="GO" id="GO:0046677">
    <property type="term" value="P:response to antibiotic"/>
    <property type="evidence" value="ECO:0007669"/>
    <property type="project" value="UniProtKB-UniRule"/>
</dbReference>
<dbReference type="HAMAP" id="MF_01006">
    <property type="entry name" value="Undec_diphosphatase"/>
    <property type="match status" value="1"/>
</dbReference>
<dbReference type="InterPro" id="IPR003824">
    <property type="entry name" value="UppP"/>
</dbReference>
<dbReference type="NCBIfam" id="NF001389">
    <property type="entry name" value="PRK00281.1-2"/>
    <property type="match status" value="1"/>
</dbReference>
<dbReference type="NCBIfam" id="NF001390">
    <property type="entry name" value="PRK00281.1-4"/>
    <property type="match status" value="1"/>
</dbReference>
<dbReference type="NCBIfam" id="TIGR00753">
    <property type="entry name" value="undec_PP_bacA"/>
    <property type="match status" value="1"/>
</dbReference>
<dbReference type="PANTHER" id="PTHR30622">
    <property type="entry name" value="UNDECAPRENYL-DIPHOSPHATASE"/>
    <property type="match status" value="1"/>
</dbReference>
<dbReference type="PANTHER" id="PTHR30622:SF3">
    <property type="entry name" value="UNDECAPRENYL-DIPHOSPHATASE"/>
    <property type="match status" value="1"/>
</dbReference>
<dbReference type="Pfam" id="PF02673">
    <property type="entry name" value="BacA"/>
    <property type="match status" value="1"/>
</dbReference>
<organism>
    <name type="scientific">Burkholderia pseudomallei (strain 1710b)</name>
    <dbReference type="NCBI Taxonomy" id="320372"/>
    <lineage>
        <taxon>Bacteria</taxon>
        <taxon>Pseudomonadati</taxon>
        <taxon>Pseudomonadota</taxon>
        <taxon>Betaproteobacteria</taxon>
        <taxon>Burkholderiales</taxon>
        <taxon>Burkholderiaceae</taxon>
        <taxon>Burkholderia</taxon>
        <taxon>pseudomallei group</taxon>
    </lineage>
</organism>
<reference key="1">
    <citation type="journal article" date="2010" name="Genome Biol. Evol.">
        <title>Continuing evolution of Burkholderia mallei through genome reduction and large-scale rearrangements.</title>
        <authorList>
            <person name="Losada L."/>
            <person name="Ronning C.M."/>
            <person name="DeShazer D."/>
            <person name="Woods D."/>
            <person name="Fedorova N."/>
            <person name="Kim H.S."/>
            <person name="Shabalina S.A."/>
            <person name="Pearson T.R."/>
            <person name="Brinkac L."/>
            <person name="Tan P."/>
            <person name="Nandi T."/>
            <person name="Crabtree J."/>
            <person name="Badger J."/>
            <person name="Beckstrom-Sternberg S."/>
            <person name="Saqib M."/>
            <person name="Schutzer S.E."/>
            <person name="Keim P."/>
            <person name="Nierman W.C."/>
        </authorList>
    </citation>
    <scope>NUCLEOTIDE SEQUENCE [LARGE SCALE GENOMIC DNA]</scope>
    <source>
        <strain>1710b</strain>
    </source>
</reference>
<sequence>MDWILICKALALGIVEGLTEFLPVSSTGHLIVAGSFLRFHPEQAKTFDVVIQFGAILAVCWEYRRRIIDVVTGLPAQREARRFTMNVVIATVPAVALALLFEKTIKSVLFAPVPVAVALVVGGAAILWVEGRQRERSEPARVQSIDALTPFDALKVGLAQCCALIPGMSRSGSTIIGGMLFGLERRVATEFSFFLAIPVIFGATLYETAKDWRAFNVDSVGLFAIGLVAAFVSAFACVRWLLRYVASHDFTAFAWYRIAFGLFVLLVGYSGWIEWT</sequence>
<name>UPPP2_BURP1</name>
<protein>
    <recommendedName>
        <fullName evidence="1">Undecaprenyl-diphosphatase 2</fullName>
        <ecNumber evidence="1">3.6.1.27</ecNumber>
    </recommendedName>
    <alternativeName>
        <fullName evidence="1">Bacitracin resistance protein 2</fullName>
    </alternativeName>
    <alternativeName>
        <fullName evidence="1">Undecaprenyl pyrophosphate phosphatase 2</fullName>
    </alternativeName>
</protein>
<comment type="function">
    <text evidence="1">Catalyzes the dephosphorylation of undecaprenyl diphosphate (UPP). Confers resistance to bacitracin.</text>
</comment>
<comment type="catalytic activity">
    <reaction evidence="1">
        <text>di-trans,octa-cis-undecaprenyl diphosphate + H2O = di-trans,octa-cis-undecaprenyl phosphate + phosphate + H(+)</text>
        <dbReference type="Rhea" id="RHEA:28094"/>
        <dbReference type="ChEBI" id="CHEBI:15377"/>
        <dbReference type="ChEBI" id="CHEBI:15378"/>
        <dbReference type="ChEBI" id="CHEBI:43474"/>
        <dbReference type="ChEBI" id="CHEBI:58405"/>
        <dbReference type="ChEBI" id="CHEBI:60392"/>
        <dbReference type="EC" id="3.6.1.27"/>
    </reaction>
</comment>
<comment type="subcellular location">
    <subcellularLocation>
        <location evidence="1">Cell inner membrane</location>
        <topology evidence="1">Multi-pass membrane protein</topology>
    </subcellularLocation>
</comment>
<comment type="miscellaneous">
    <text>Bacitracin is thought to be involved in the inhibition of peptidoglycan synthesis by sequestering undecaprenyl diphosphate, thereby reducing the pool of lipid carrier available.</text>
</comment>
<comment type="similarity">
    <text evidence="1">Belongs to the UppP family.</text>
</comment>